<dbReference type="EC" id="2.7.7.6" evidence="1"/>
<dbReference type="EMBL" id="CP000450">
    <property type="protein sequence ID" value="ABI60029.1"/>
    <property type="molecule type" value="Genomic_DNA"/>
</dbReference>
<dbReference type="RefSeq" id="WP_011634835.1">
    <property type="nucleotide sequence ID" value="NC_008344.1"/>
</dbReference>
<dbReference type="SMR" id="Q0AF53"/>
<dbReference type="STRING" id="335283.Neut_1795"/>
<dbReference type="KEGG" id="net:Neut_1795"/>
<dbReference type="eggNOG" id="COG0085">
    <property type="taxonomic scope" value="Bacteria"/>
</dbReference>
<dbReference type="HOGENOM" id="CLU_000524_4_0_4"/>
<dbReference type="OrthoDB" id="9803954at2"/>
<dbReference type="Proteomes" id="UP000001966">
    <property type="component" value="Chromosome"/>
</dbReference>
<dbReference type="GO" id="GO:0000428">
    <property type="term" value="C:DNA-directed RNA polymerase complex"/>
    <property type="evidence" value="ECO:0007669"/>
    <property type="project" value="UniProtKB-KW"/>
</dbReference>
<dbReference type="GO" id="GO:0003677">
    <property type="term" value="F:DNA binding"/>
    <property type="evidence" value="ECO:0007669"/>
    <property type="project" value="UniProtKB-UniRule"/>
</dbReference>
<dbReference type="GO" id="GO:0003899">
    <property type="term" value="F:DNA-directed RNA polymerase activity"/>
    <property type="evidence" value="ECO:0007669"/>
    <property type="project" value="UniProtKB-UniRule"/>
</dbReference>
<dbReference type="GO" id="GO:0032549">
    <property type="term" value="F:ribonucleoside binding"/>
    <property type="evidence" value="ECO:0007669"/>
    <property type="project" value="InterPro"/>
</dbReference>
<dbReference type="GO" id="GO:0006351">
    <property type="term" value="P:DNA-templated transcription"/>
    <property type="evidence" value="ECO:0007669"/>
    <property type="project" value="UniProtKB-UniRule"/>
</dbReference>
<dbReference type="CDD" id="cd00653">
    <property type="entry name" value="RNA_pol_B_RPB2"/>
    <property type="match status" value="1"/>
</dbReference>
<dbReference type="FunFam" id="2.40.50.100:FF:000006">
    <property type="entry name" value="DNA-directed RNA polymerase subunit beta"/>
    <property type="match status" value="1"/>
</dbReference>
<dbReference type="FunFam" id="3.90.1800.10:FF:000001">
    <property type="entry name" value="DNA-directed RNA polymerase subunit beta"/>
    <property type="match status" value="1"/>
</dbReference>
<dbReference type="Gene3D" id="2.40.50.100">
    <property type="match status" value="1"/>
</dbReference>
<dbReference type="Gene3D" id="2.40.50.150">
    <property type="match status" value="1"/>
</dbReference>
<dbReference type="Gene3D" id="3.90.1100.10">
    <property type="match status" value="2"/>
</dbReference>
<dbReference type="Gene3D" id="2.30.150.10">
    <property type="entry name" value="DNA-directed RNA polymerase, beta subunit, external 1 domain"/>
    <property type="match status" value="1"/>
</dbReference>
<dbReference type="Gene3D" id="2.40.270.10">
    <property type="entry name" value="DNA-directed RNA polymerase, subunit 2, domain 6"/>
    <property type="match status" value="1"/>
</dbReference>
<dbReference type="Gene3D" id="3.90.1800.10">
    <property type="entry name" value="RNA polymerase alpha subunit dimerisation domain"/>
    <property type="match status" value="1"/>
</dbReference>
<dbReference type="Gene3D" id="3.90.1110.10">
    <property type="entry name" value="RNA polymerase Rpb2, domain 2"/>
    <property type="match status" value="1"/>
</dbReference>
<dbReference type="HAMAP" id="MF_01321">
    <property type="entry name" value="RNApol_bact_RpoB"/>
    <property type="match status" value="1"/>
</dbReference>
<dbReference type="InterPro" id="IPR042107">
    <property type="entry name" value="DNA-dir_RNA_pol_bsu_ext_1_sf"/>
</dbReference>
<dbReference type="InterPro" id="IPR019462">
    <property type="entry name" value="DNA-dir_RNA_pol_bsu_external_1"/>
</dbReference>
<dbReference type="InterPro" id="IPR015712">
    <property type="entry name" value="DNA-dir_RNA_pol_su2"/>
</dbReference>
<dbReference type="InterPro" id="IPR007120">
    <property type="entry name" value="DNA-dir_RNAP_su2_dom"/>
</dbReference>
<dbReference type="InterPro" id="IPR037033">
    <property type="entry name" value="DNA-dir_RNAP_su2_hyb_sf"/>
</dbReference>
<dbReference type="InterPro" id="IPR010243">
    <property type="entry name" value="RNA_pol_bsu_bac"/>
</dbReference>
<dbReference type="InterPro" id="IPR007121">
    <property type="entry name" value="RNA_pol_bsu_CS"/>
</dbReference>
<dbReference type="InterPro" id="IPR007644">
    <property type="entry name" value="RNA_pol_bsu_protrusion"/>
</dbReference>
<dbReference type="InterPro" id="IPR007642">
    <property type="entry name" value="RNA_pol_Rpb2_2"/>
</dbReference>
<dbReference type="InterPro" id="IPR037034">
    <property type="entry name" value="RNA_pol_Rpb2_2_sf"/>
</dbReference>
<dbReference type="InterPro" id="IPR007645">
    <property type="entry name" value="RNA_pol_Rpb2_3"/>
</dbReference>
<dbReference type="InterPro" id="IPR007641">
    <property type="entry name" value="RNA_pol_Rpb2_7"/>
</dbReference>
<dbReference type="InterPro" id="IPR014724">
    <property type="entry name" value="RNA_pol_RPB2_OB-fold"/>
</dbReference>
<dbReference type="NCBIfam" id="NF001616">
    <property type="entry name" value="PRK00405.1"/>
    <property type="match status" value="1"/>
</dbReference>
<dbReference type="NCBIfam" id="TIGR02013">
    <property type="entry name" value="rpoB"/>
    <property type="match status" value="1"/>
</dbReference>
<dbReference type="PANTHER" id="PTHR20856">
    <property type="entry name" value="DNA-DIRECTED RNA POLYMERASE I SUBUNIT 2"/>
    <property type="match status" value="1"/>
</dbReference>
<dbReference type="Pfam" id="PF04563">
    <property type="entry name" value="RNA_pol_Rpb2_1"/>
    <property type="match status" value="1"/>
</dbReference>
<dbReference type="Pfam" id="PF04561">
    <property type="entry name" value="RNA_pol_Rpb2_2"/>
    <property type="match status" value="2"/>
</dbReference>
<dbReference type="Pfam" id="PF04565">
    <property type="entry name" value="RNA_pol_Rpb2_3"/>
    <property type="match status" value="1"/>
</dbReference>
<dbReference type="Pfam" id="PF10385">
    <property type="entry name" value="RNA_pol_Rpb2_45"/>
    <property type="match status" value="1"/>
</dbReference>
<dbReference type="Pfam" id="PF00562">
    <property type="entry name" value="RNA_pol_Rpb2_6"/>
    <property type="match status" value="1"/>
</dbReference>
<dbReference type="Pfam" id="PF04560">
    <property type="entry name" value="RNA_pol_Rpb2_7"/>
    <property type="match status" value="1"/>
</dbReference>
<dbReference type="SUPFAM" id="SSF64484">
    <property type="entry name" value="beta and beta-prime subunits of DNA dependent RNA-polymerase"/>
    <property type="match status" value="1"/>
</dbReference>
<dbReference type="PROSITE" id="PS01166">
    <property type="entry name" value="RNA_POL_BETA"/>
    <property type="match status" value="1"/>
</dbReference>
<feature type="chain" id="PRO_0000300359" description="DNA-directed RNA polymerase subunit beta">
    <location>
        <begin position="1"/>
        <end position="1359"/>
    </location>
</feature>
<proteinExistence type="inferred from homology"/>
<accession>Q0AF53</accession>
<sequence length="1359" mass="151908">MSYSFAEKKRIRKSFAKRTSILPFPFLLATQIESYADFLQADVAPGKRKNQGLQAAFNAVFPIESHSNNARLDFISYMLGTSVFDVKECQQRGLTYASPLRARVRLTIMDKEASKPTVKEVKEQEVYMGEIPLMTETGSFVVNGTERVIVSQLHRSPGVFFEHDRGKTHSSGKLLFSARIIPYRGSWLDFEFDPKDYVYFRIDRRRKMPVTTLLKAMGYSSTQILADFFEFDHFTLAGNKILFHLIPERLRGELASFDIVSEDGKVFVQKDKRITAKHVRDLQQANLTKISVPEEFLLGKILAEDIVDKETGEVVATANSEINETLLERIKQTQNKNSEISTLFVNDLNYGPYISQTLRVDESTDQMSAQVAIYRMMRPGEPPTEDAVLALFNGLFYSPERYDLSVVGRMKFNRRVGREELTGSTTLSNEDITDVIKILVGLRNGRGEIDDIDHLGNRRVRSVGELAENQFRAGLARVEKAVKERLSQAESENLMPHDFINAKPVSSAIREFFGSSQLSQFMDQTNPLSEITHKRRISALGPGGLTRERAGFEVRDVHPTHYGRVCPIETPEGPNIGLINSLALYARTNEYGFIETPYRMVKNSRVTEEVVYLSAIEESQYVIAQANANFDQTGVFTDEVVSCRHKNEFTLASRDQIEYVDIAPAQIVSVAASLIPFLEHDDANRALMGSNMQRQAVPCLRAEKPLVGTGIERVVAVHSGTAVKALRGGVVDYVDAGRIVIRVHDAETRAGEVGVDIYNLTKYIRSNQNTNINQRPIVKIGDILSREDVIADGASTDLGELALGQNMLIAFMPWNGLNFEDSILISERVVSDDRFTSIHIEELTAVSRDTKLGTEEVTADIPNLSERQRARLDESGIVYIGAEVEAGDVLVGKVTPKSETQLTPEEKLLRAIFGEKASDVKDTSLHVPAGISGTVIDVQIFTREGVDRDKRSKQIIADELGRFKKDLADQMRIVEADAFQRAKRLLAGKVAAGGPKKLAKNSTITQEYLESVEKHHWFDIRLIDENTSLQLEQIKDSLVQKRKLFDLAFEEKQRKLSQGDELPPGVQKMVKVYIAVKRRLQSGDKMAGRHGNKGVISKIVPVEDMPYMADGTPVDVVLNPLGVPSRMNIGQVLEVHLGWAAKGLGKKINEMLISQRDASEIRDFLSKIYSDNGKQEDLVSLDDKEILELAKNLSDGVPFATPVFDGAHESEIKHMLKLADLPESGQTTLYDGRTGEAFDRLVTVGYMHVLKLHHLVDDKMHARSTGPYSLVTQQPLGGKAQFGGQRFGEMEVWALEAYGAAYTLQEMLTVKSDDVNGRTKVYESIVKGDHKIDAGMPESFNVLVKEIRSLGLDIDLEQH</sequence>
<organism>
    <name type="scientific">Nitrosomonas eutropha (strain DSM 101675 / C91 / Nm57)</name>
    <dbReference type="NCBI Taxonomy" id="335283"/>
    <lineage>
        <taxon>Bacteria</taxon>
        <taxon>Pseudomonadati</taxon>
        <taxon>Pseudomonadota</taxon>
        <taxon>Betaproteobacteria</taxon>
        <taxon>Nitrosomonadales</taxon>
        <taxon>Nitrosomonadaceae</taxon>
        <taxon>Nitrosomonas</taxon>
    </lineage>
</organism>
<name>RPOB_NITEC</name>
<comment type="function">
    <text evidence="1">DNA-dependent RNA polymerase catalyzes the transcription of DNA into RNA using the four ribonucleoside triphosphates as substrates.</text>
</comment>
<comment type="catalytic activity">
    <reaction evidence="1">
        <text>RNA(n) + a ribonucleoside 5'-triphosphate = RNA(n+1) + diphosphate</text>
        <dbReference type="Rhea" id="RHEA:21248"/>
        <dbReference type="Rhea" id="RHEA-COMP:14527"/>
        <dbReference type="Rhea" id="RHEA-COMP:17342"/>
        <dbReference type="ChEBI" id="CHEBI:33019"/>
        <dbReference type="ChEBI" id="CHEBI:61557"/>
        <dbReference type="ChEBI" id="CHEBI:140395"/>
        <dbReference type="EC" id="2.7.7.6"/>
    </reaction>
</comment>
<comment type="subunit">
    <text evidence="1">The RNAP catalytic core consists of 2 alpha, 1 beta, 1 beta' and 1 omega subunit. When a sigma factor is associated with the core the holoenzyme is formed, which can initiate transcription.</text>
</comment>
<comment type="similarity">
    <text evidence="1">Belongs to the RNA polymerase beta chain family.</text>
</comment>
<gene>
    <name evidence="1" type="primary">rpoB</name>
    <name type="ordered locus">Neut_1795</name>
</gene>
<reference key="1">
    <citation type="journal article" date="2007" name="Environ. Microbiol.">
        <title>Whole-genome analysis of the ammonia-oxidizing bacterium, Nitrosomonas eutropha C91: implications for niche adaptation.</title>
        <authorList>
            <person name="Stein L.Y."/>
            <person name="Arp D.J."/>
            <person name="Berube P.M."/>
            <person name="Chain P.S."/>
            <person name="Hauser L."/>
            <person name="Jetten M.S."/>
            <person name="Klotz M.G."/>
            <person name="Larimer F.W."/>
            <person name="Norton J.M."/>
            <person name="Op den Camp H.J.M."/>
            <person name="Shin M."/>
            <person name="Wei X."/>
        </authorList>
    </citation>
    <scope>NUCLEOTIDE SEQUENCE [LARGE SCALE GENOMIC DNA]</scope>
    <source>
        <strain>DSM 101675 / C91 / Nm57</strain>
    </source>
</reference>
<evidence type="ECO:0000255" key="1">
    <source>
        <dbReference type="HAMAP-Rule" id="MF_01321"/>
    </source>
</evidence>
<protein>
    <recommendedName>
        <fullName evidence="1">DNA-directed RNA polymerase subunit beta</fullName>
        <shortName evidence="1">RNAP subunit beta</shortName>
        <ecNumber evidence="1">2.7.7.6</ecNumber>
    </recommendedName>
    <alternativeName>
        <fullName evidence="1">RNA polymerase subunit beta</fullName>
    </alternativeName>
    <alternativeName>
        <fullName evidence="1">Transcriptase subunit beta</fullName>
    </alternativeName>
</protein>
<keyword id="KW-0240">DNA-directed RNA polymerase</keyword>
<keyword id="KW-0548">Nucleotidyltransferase</keyword>
<keyword id="KW-0804">Transcription</keyword>
<keyword id="KW-0808">Transferase</keyword>